<comment type="function">
    <text evidence="1">Thiol-specific peroxidase that catalyzes the reduction of hydrogen peroxide and organic hydroperoxides to water and alcohols, respectively. Plays a role in cell protection against oxidative stress by detoxifying peroxides.</text>
</comment>
<comment type="catalytic activity">
    <reaction evidence="1">
        <text>a hydroperoxide + [thioredoxin]-dithiol = an alcohol + [thioredoxin]-disulfide + H2O</text>
        <dbReference type="Rhea" id="RHEA:62620"/>
        <dbReference type="Rhea" id="RHEA-COMP:10698"/>
        <dbReference type="Rhea" id="RHEA-COMP:10700"/>
        <dbReference type="ChEBI" id="CHEBI:15377"/>
        <dbReference type="ChEBI" id="CHEBI:29950"/>
        <dbReference type="ChEBI" id="CHEBI:30879"/>
        <dbReference type="ChEBI" id="CHEBI:35924"/>
        <dbReference type="ChEBI" id="CHEBI:50058"/>
        <dbReference type="EC" id="1.11.1.24"/>
    </reaction>
</comment>
<comment type="subunit">
    <text evidence="1">Homodimer.</text>
</comment>
<comment type="miscellaneous">
    <text evidence="1">The active site is a conserved redox-active cysteine residue, the peroxidatic cysteine (C(P)), which makes the nucleophilic attack on the peroxide substrate. The peroxide oxidizes the C(P)-SH to cysteine sulfenic acid (C(P)-SOH), which then reacts with another cysteine residue, the resolving cysteine (C(R)), to form a disulfide bridge. The disulfide is subsequently reduced by an appropriate electron donor to complete the catalytic cycle. In this atypical 2-Cys peroxiredoxin, C(R) is present in the same subunit to form an intramolecular disulfide. The disulfide is subsequently reduced by thioredoxin.</text>
</comment>
<comment type="similarity">
    <text evidence="1">Belongs to the peroxiredoxin family. Tpx subfamily.</text>
</comment>
<keyword id="KW-0049">Antioxidant</keyword>
<keyword id="KW-1015">Disulfide bond</keyword>
<keyword id="KW-0560">Oxidoreductase</keyword>
<keyword id="KW-0575">Peroxidase</keyword>
<keyword id="KW-0676">Redox-active center</keyword>
<keyword id="KW-1185">Reference proteome</keyword>
<name>TPX_STAS1</name>
<accession>Q49YE4</accession>
<gene>
    <name evidence="1" type="primary">tpx</name>
    <name type="ordered locus">SSP1052</name>
</gene>
<sequence length="164" mass="18256">MAQITFKQEPITLLGSQVKTGETAPEFTLLDNDLNEVNLSTYDGQKKLISVVPSIDTGVCDQQTRKFNEEASQEDGVVLTVSVDLPFAQKRWCASNGLDNVITLSDHKDLSFGKNYGVVMEELRLLARSVFVLDKNNKVVYSEIVSEGTDFPDFESALEAYRNI</sequence>
<proteinExistence type="inferred from homology"/>
<evidence type="ECO:0000255" key="1">
    <source>
        <dbReference type="HAMAP-Rule" id="MF_00269"/>
    </source>
</evidence>
<feature type="chain" id="PRO_0000187907" description="Thiol peroxidase">
    <location>
        <begin position="1"/>
        <end position="164"/>
    </location>
</feature>
<feature type="domain" description="Thioredoxin" evidence="1">
    <location>
        <begin position="18"/>
        <end position="163"/>
    </location>
</feature>
<feature type="active site" description="Cysteine sulfenic acid (-SOH) intermediate" evidence="1">
    <location>
        <position position="60"/>
    </location>
</feature>
<feature type="disulfide bond" description="Redox-active" evidence="1">
    <location>
        <begin position="60"/>
        <end position="93"/>
    </location>
</feature>
<dbReference type="EC" id="1.11.1.24" evidence="1"/>
<dbReference type="EMBL" id="AP008934">
    <property type="protein sequence ID" value="BAE18197.1"/>
    <property type="molecule type" value="Genomic_DNA"/>
</dbReference>
<dbReference type="RefSeq" id="WP_002483031.1">
    <property type="nucleotide sequence ID" value="NZ_MTGA01000033.1"/>
</dbReference>
<dbReference type="SMR" id="Q49YE4"/>
<dbReference type="GeneID" id="66867285"/>
<dbReference type="KEGG" id="ssp:SSP1052"/>
<dbReference type="eggNOG" id="COG2077">
    <property type="taxonomic scope" value="Bacteria"/>
</dbReference>
<dbReference type="HOGENOM" id="CLU_042529_12_0_9"/>
<dbReference type="OrthoDB" id="9781543at2"/>
<dbReference type="Proteomes" id="UP000006371">
    <property type="component" value="Chromosome"/>
</dbReference>
<dbReference type="GO" id="GO:0008379">
    <property type="term" value="F:thioredoxin peroxidase activity"/>
    <property type="evidence" value="ECO:0007669"/>
    <property type="project" value="UniProtKB-UniRule"/>
</dbReference>
<dbReference type="CDD" id="cd03014">
    <property type="entry name" value="PRX_Atyp2cys"/>
    <property type="match status" value="1"/>
</dbReference>
<dbReference type="Gene3D" id="3.40.30.10">
    <property type="entry name" value="Glutaredoxin"/>
    <property type="match status" value="1"/>
</dbReference>
<dbReference type="HAMAP" id="MF_00269">
    <property type="entry name" value="Tpx"/>
    <property type="match status" value="1"/>
</dbReference>
<dbReference type="InterPro" id="IPR013740">
    <property type="entry name" value="Redoxin"/>
</dbReference>
<dbReference type="InterPro" id="IPR036249">
    <property type="entry name" value="Thioredoxin-like_sf"/>
</dbReference>
<dbReference type="InterPro" id="IPR013766">
    <property type="entry name" value="Thioredoxin_domain"/>
</dbReference>
<dbReference type="InterPro" id="IPR002065">
    <property type="entry name" value="TPX"/>
</dbReference>
<dbReference type="InterPro" id="IPR018219">
    <property type="entry name" value="Tpx_CS"/>
</dbReference>
<dbReference type="InterPro" id="IPR050455">
    <property type="entry name" value="Tpx_Peroxidase_subfamily"/>
</dbReference>
<dbReference type="NCBIfam" id="NF001808">
    <property type="entry name" value="PRK00522.1"/>
    <property type="match status" value="1"/>
</dbReference>
<dbReference type="PANTHER" id="PTHR43110">
    <property type="entry name" value="THIOL PEROXIDASE"/>
    <property type="match status" value="1"/>
</dbReference>
<dbReference type="PANTHER" id="PTHR43110:SF1">
    <property type="entry name" value="THIOL PEROXIDASE"/>
    <property type="match status" value="1"/>
</dbReference>
<dbReference type="Pfam" id="PF08534">
    <property type="entry name" value="Redoxin"/>
    <property type="match status" value="1"/>
</dbReference>
<dbReference type="SUPFAM" id="SSF52833">
    <property type="entry name" value="Thioredoxin-like"/>
    <property type="match status" value="1"/>
</dbReference>
<dbReference type="PROSITE" id="PS51352">
    <property type="entry name" value="THIOREDOXIN_2"/>
    <property type="match status" value="1"/>
</dbReference>
<dbReference type="PROSITE" id="PS01265">
    <property type="entry name" value="TPX"/>
    <property type="match status" value="1"/>
</dbReference>
<protein>
    <recommendedName>
        <fullName evidence="1">Thiol peroxidase</fullName>
        <shortName evidence="1">Tpx</shortName>
        <ecNumber evidence="1">1.11.1.24</ecNumber>
    </recommendedName>
    <alternativeName>
        <fullName evidence="1">Peroxiredoxin tpx</fullName>
        <shortName evidence="1">Prx</shortName>
    </alternativeName>
    <alternativeName>
        <fullName evidence="1">Thioredoxin peroxidase</fullName>
    </alternativeName>
    <alternativeName>
        <fullName evidence="1">Thioredoxin-dependent peroxiredoxin</fullName>
    </alternativeName>
</protein>
<organism>
    <name type="scientific">Staphylococcus saprophyticus subsp. saprophyticus (strain ATCC 15305 / DSM 20229 / NCIMB 8711 / NCTC 7292 / S-41)</name>
    <dbReference type="NCBI Taxonomy" id="342451"/>
    <lineage>
        <taxon>Bacteria</taxon>
        <taxon>Bacillati</taxon>
        <taxon>Bacillota</taxon>
        <taxon>Bacilli</taxon>
        <taxon>Bacillales</taxon>
        <taxon>Staphylococcaceae</taxon>
        <taxon>Staphylococcus</taxon>
    </lineage>
</organism>
<reference key="1">
    <citation type="journal article" date="2005" name="Proc. Natl. Acad. Sci. U.S.A.">
        <title>Whole genome sequence of Staphylococcus saprophyticus reveals the pathogenesis of uncomplicated urinary tract infection.</title>
        <authorList>
            <person name="Kuroda M."/>
            <person name="Yamashita A."/>
            <person name="Hirakawa H."/>
            <person name="Kumano M."/>
            <person name="Morikawa K."/>
            <person name="Higashide M."/>
            <person name="Maruyama A."/>
            <person name="Inose Y."/>
            <person name="Matoba K."/>
            <person name="Toh H."/>
            <person name="Kuhara S."/>
            <person name="Hattori M."/>
            <person name="Ohta T."/>
        </authorList>
    </citation>
    <scope>NUCLEOTIDE SEQUENCE [LARGE SCALE GENOMIC DNA]</scope>
    <source>
        <strain>ATCC 15305 / DSM 20229 / NCIMB 8711 / NCTC 7292 / S-41</strain>
    </source>
</reference>